<name>COW3_CONCL</name>
<dbReference type="GO" id="GO:0005576">
    <property type="term" value="C:extracellular region"/>
    <property type="evidence" value="ECO:0007669"/>
    <property type="project" value="UniProtKB-SubCell"/>
</dbReference>
<dbReference type="GO" id="GO:0090729">
    <property type="term" value="F:toxin activity"/>
    <property type="evidence" value="ECO:0007669"/>
    <property type="project" value="UniProtKB-KW"/>
</dbReference>
<accession>P0DUA8</accession>
<reference key="1">
    <citation type="journal article" date="2019" name="Toxins">
        <title>The diversified O-superfamily in Californiconus californicus presents a conotoxin with antimycobacterial activity.</title>
        <authorList>
            <person name="Bernaldez-Sarabia J."/>
            <person name="Figueroa-Montiel A."/>
            <person name="Duenas S."/>
            <person name="Cervantes-Luevano K."/>
            <person name="Beltran J.A."/>
            <person name="Ortiz E."/>
            <person name="Jimenez S."/>
            <person name="Possani L.D."/>
            <person name="Paniagua-Solis J.F."/>
            <person name="Gonzalez-Canudas J."/>
            <person name="Licea-Navarro A."/>
        </authorList>
    </citation>
    <scope>NUCLEOTIDE SEQUENCE [MRNA]</scope>
    <source>
        <tissue>Venom duct</tissue>
    </source>
</reference>
<feature type="signal peptide" evidence="1">
    <location>
        <begin position="1"/>
        <end position="20"/>
    </location>
</feature>
<feature type="peptide" id="PRO_0000450990" description="Contryphan-Cal3">
    <location>
        <begin position="21"/>
        <end position="39"/>
    </location>
</feature>
<feature type="disulfide bond" evidence="3">
    <location>
        <begin position="29"/>
        <end position="35"/>
    </location>
</feature>
<keyword id="KW-1015">Disulfide bond</keyword>
<keyword id="KW-0528">Neurotoxin</keyword>
<keyword id="KW-0964">Secreted</keyword>
<keyword id="KW-0732">Signal</keyword>
<keyword id="KW-0800">Toxin</keyword>
<sequence length="39" mass="4442">MTRTAVLLLTLLFLVAMAASDKIKTRELCWSERECENGK</sequence>
<proteinExistence type="inferred from homology"/>
<protein>
    <recommendedName>
        <fullName evidence="3">Contryphan-Cal3</fullName>
    </recommendedName>
    <alternativeName>
        <fullName evidence="2">O3_contryphan-like cal3</fullName>
    </alternativeName>
</protein>
<comment type="function">
    <text evidence="3">Probable neurotoxin.</text>
</comment>
<comment type="subcellular location">
    <subcellularLocation>
        <location evidence="4">Secreted</location>
    </subcellularLocation>
</comment>
<comment type="tissue specificity">
    <text evidence="4">Expressed by the venom duct.</text>
</comment>
<comment type="domain">
    <text evidence="3">The cysteine framework is C-C.</text>
</comment>
<organism>
    <name type="scientific">Californiconus californicus</name>
    <name type="common">California cone</name>
    <name type="synonym">Conus californicus</name>
    <dbReference type="NCBI Taxonomy" id="1736779"/>
    <lineage>
        <taxon>Eukaryota</taxon>
        <taxon>Metazoa</taxon>
        <taxon>Spiralia</taxon>
        <taxon>Lophotrochozoa</taxon>
        <taxon>Mollusca</taxon>
        <taxon>Gastropoda</taxon>
        <taxon>Caenogastropoda</taxon>
        <taxon>Neogastropoda</taxon>
        <taxon>Conoidea</taxon>
        <taxon>Conidae</taxon>
        <taxon>Californiconus</taxon>
    </lineage>
</organism>
<evidence type="ECO:0000255" key="1"/>
<evidence type="ECO:0000303" key="2">
    <source>
    </source>
</evidence>
<evidence type="ECO:0000305" key="3"/>
<evidence type="ECO:0000305" key="4">
    <source>
    </source>
</evidence>